<comment type="function">
    <text evidence="1">Involved in the partitioning of the mitochondrial organelle and mitochondrial DNA (mtDNA) inheritance.</text>
</comment>
<comment type="subcellular location">
    <subcellularLocation>
        <location evidence="1">Mitochondrion</location>
    </subcellularLocation>
</comment>
<comment type="similarity">
    <text evidence="2">Belongs to the misato family.</text>
</comment>
<reference key="1">
    <citation type="journal article" date="2009" name="Genome Res.">
        <title>Comparative genomic analyses of the human fungal pathogens Coccidioides and their relatives.</title>
        <authorList>
            <person name="Sharpton T.J."/>
            <person name="Stajich J.E."/>
            <person name="Rounsley S.D."/>
            <person name="Gardner M.J."/>
            <person name="Wortman J.R."/>
            <person name="Jordar V.S."/>
            <person name="Maiti R."/>
            <person name="Kodira C.D."/>
            <person name="Neafsey D.E."/>
            <person name="Zeng Q."/>
            <person name="Hung C.-Y."/>
            <person name="McMahan C."/>
            <person name="Muszewska A."/>
            <person name="Grynberg M."/>
            <person name="Mandel M.A."/>
            <person name="Kellner E.M."/>
            <person name="Barker B.M."/>
            <person name="Galgiani J.N."/>
            <person name="Orbach M.J."/>
            <person name="Kirkland T.N."/>
            <person name="Cole G.T."/>
            <person name="Henn M.R."/>
            <person name="Birren B.W."/>
            <person name="Taylor J.W."/>
        </authorList>
    </citation>
    <scope>NUCLEOTIDE SEQUENCE [LARGE SCALE GENOMIC DNA]</scope>
    <source>
        <strain>RS</strain>
    </source>
</reference>
<reference key="2">
    <citation type="journal article" date="2010" name="Genome Res.">
        <title>Population genomic sequencing of Coccidioides fungi reveals recent hybridization and transposon control.</title>
        <authorList>
            <person name="Neafsey D.E."/>
            <person name="Barker B.M."/>
            <person name="Sharpton T.J."/>
            <person name="Stajich J.E."/>
            <person name="Park D.J."/>
            <person name="Whiston E."/>
            <person name="Hung C.-Y."/>
            <person name="McMahan C."/>
            <person name="White J."/>
            <person name="Sykes S."/>
            <person name="Heiman D."/>
            <person name="Young S."/>
            <person name="Zeng Q."/>
            <person name="Abouelleil A."/>
            <person name="Aftuck L."/>
            <person name="Bessette D."/>
            <person name="Brown A."/>
            <person name="FitzGerald M."/>
            <person name="Lui A."/>
            <person name="Macdonald J.P."/>
            <person name="Priest M."/>
            <person name="Orbach M.J."/>
            <person name="Galgiani J.N."/>
            <person name="Kirkland T.N."/>
            <person name="Cole G.T."/>
            <person name="Birren B.W."/>
            <person name="Henn M.R."/>
            <person name="Taylor J.W."/>
            <person name="Rounsley S.D."/>
        </authorList>
    </citation>
    <scope>GENOME REANNOTATION</scope>
    <source>
        <strain>RS</strain>
    </source>
</reference>
<evidence type="ECO:0000250" key="1"/>
<evidence type="ECO:0000305" key="2"/>
<sequence length="516" mass="58758">MREIITLQLGQRSNYLATHFWNVQESYFTYSENEASPVDHDISFRPGIGADGSETFTPRTIIYDLKGGFGSLRQYNALYEVEENVGMPKGLWDGNEVIQRQPNIPQSEYQKALELGLPLPRLTPETVRYWSDFNRLFYHPKSIVQLNEYEMNSQLMPFEDWTVGEAFFNSLDREHDLLDRDFRPFAEECDQLRGIQLFTGTDDAWGGFAARYIDRLRDEFGKKIIWTFALESGLKTEREKQFLRAKNSAKSISEISRQSTAYVPISMPPSKLPHYVNLNIASEWYISALTSVAVESVTLPGRLRWYEGIEPWFLDNAGPQRIFALRATIRSENSELPFASHLRPNDSTQMDTDEVDHDEIEQSEQRFDLGFSPIGSATRTNNTHIFSQVQVVRDSKCNSERPERAEVGQGLTSHRLSLMTGYVPSTLSNFRSTLEFPILDSFPSDLIHEQGPAGSTLRVDAALSATSGIGRDLKNLQQTIGRRIALEEREDLINGLHELSHAYQAGWENDSDSGDD</sequence>
<feature type="chain" id="PRO_0000285333" description="Protein DML1">
    <location>
        <begin position="1"/>
        <end position="516"/>
    </location>
</feature>
<organism>
    <name type="scientific">Coccidioides immitis (strain RS)</name>
    <name type="common">Valley fever fungus</name>
    <dbReference type="NCBI Taxonomy" id="246410"/>
    <lineage>
        <taxon>Eukaryota</taxon>
        <taxon>Fungi</taxon>
        <taxon>Dikarya</taxon>
        <taxon>Ascomycota</taxon>
        <taxon>Pezizomycotina</taxon>
        <taxon>Eurotiomycetes</taxon>
        <taxon>Eurotiomycetidae</taxon>
        <taxon>Onygenales</taxon>
        <taxon>Onygenaceae</taxon>
        <taxon>Coccidioides</taxon>
    </lineage>
</organism>
<gene>
    <name type="primary">DML1</name>
    <name type="ORF">CIMG_03230</name>
</gene>
<proteinExistence type="inferred from homology"/>
<accession>Q1E2I3</accession>
<accession>J3KB46</accession>
<keyword id="KW-0496">Mitochondrion</keyword>
<keyword id="KW-1185">Reference proteome</keyword>
<name>DML1_COCIM</name>
<protein>
    <recommendedName>
        <fullName>Protein DML1</fullName>
    </recommendedName>
</protein>
<dbReference type="EMBL" id="GG704916">
    <property type="protein sequence ID" value="EAS32206.3"/>
    <property type="molecule type" value="Genomic_DNA"/>
</dbReference>
<dbReference type="RefSeq" id="XP_001243789.2">
    <property type="nucleotide sequence ID" value="XM_001243788.2"/>
</dbReference>
<dbReference type="FunCoup" id="Q1E2I3">
    <property type="interactions" value="62"/>
</dbReference>
<dbReference type="STRING" id="246410.Q1E2I3"/>
<dbReference type="GeneID" id="4564575"/>
<dbReference type="KEGG" id="cim:CIMG_03230"/>
<dbReference type="VEuPathDB" id="FungiDB:CIMG_03230"/>
<dbReference type="InParanoid" id="Q1E2I3"/>
<dbReference type="OMA" id="SYETGWM"/>
<dbReference type="OrthoDB" id="271881at2759"/>
<dbReference type="Proteomes" id="UP000001261">
    <property type="component" value="Unassembled WGS sequence"/>
</dbReference>
<dbReference type="GO" id="GO:0005739">
    <property type="term" value="C:mitochondrion"/>
    <property type="evidence" value="ECO:0007669"/>
    <property type="project" value="UniProtKB-SubCell"/>
</dbReference>
<dbReference type="GO" id="GO:0007005">
    <property type="term" value="P:mitochondrion organization"/>
    <property type="evidence" value="ECO:0007669"/>
    <property type="project" value="InterPro"/>
</dbReference>
<dbReference type="CDD" id="cd06060">
    <property type="entry name" value="misato"/>
    <property type="match status" value="1"/>
</dbReference>
<dbReference type="Gene3D" id="3.40.50.1440">
    <property type="entry name" value="Tubulin/FtsZ, GTPase domain"/>
    <property type="match status" value="1"/>
</dbReference>
<dbReference type="InterPro" id="IPR049942">
    <property type="entry name" value="DML1/Misato"/>
</dbReference>
<dbReference type="InterPro" id="IPR029209">
    <property type="entry name" value="DML1/Misato_tubulin"/>
</dbReference>
<dbReference type="InterPro" id="IPR019605">
    <property type="entry name" value="Misato_II_tubulin-like"/>
</dbReference>
<dbReference type="InterPro" id="IPR036525">
    <property type="entry name" value="Tubulin/FtsZ_GTPase_sf"/>
</dbReference>
<dbReference type="PANTHER" id="PTHR13391">
    <property type="entry name" value="MITOCHONDRIAL DISTRIBUTION REGULATOR MISATO"/>
    <property type="match status" value="1"/>
</dbReference>
<dbReference type="PANTHER" id="PTHR13391:SF0">
    <property type="entry name" value="PROTEIN MISATO HOMOLOG 1"/>
    <property type="match status" value="1"/>
</dbReference>
<dbReference type="Pfam" id="PF10644">
    <property type="entry name" value="Misat_Tub_SegII"/>
    <property type="match status" value="1"/>
</dbReference>
<dbReference type="Pfam" id="PF14881">
    <property type="entry name" value="Tubulin_3"/>
    <property type="match status" value="1"/>
</dbReference>
<dbReference type="SUPFAM" id="SSF52490">
    <property type="entry name" value="Tubulin nucleotide-binding domain-like"/>
    <property type="match status" value="1"/>
</dbReference>